<gene>
    <name evidence="1" type="primary">thiM</name>
    <name type="ordered locus">E2348C_2249</name>
</gene>
<dbReference type="EC" id="2.7.1.50" evidence="1"/>
<dbReference type="EMBL" id="FM180568">
    <property type="protein sequence ID" value="CAS09797.1"/>
    <property type="molecule type" value="Genomic_DNA"/>
</dbReference>
<dbReference type="RefSeq" id="WP_001195612.1">
    <property type="nucleotide sequence ID" value="NC_011601.1"/>
</dbReference>
<dbReference type="SMR" id="B7UFC1"/>
<dbReference type="KEGG" id="ecg:E2348C_2249"/>
<dbReference type="HOGENOM" id="CLU_019943_0_1_6"/>
<dbReference type="UniPathway" id="UPA00060">
    <property type="reaction ID" value="UER00139"/>
</dbReference>
<dbReference type="Proteomes" id="UP000008205">
    <property type="component" value="Chromosome"/>
</dbReference>
<dbReference type="GO" id="GO:0005524">
    <property type="term" value="F:ATP binding"/>
    <property type="evidence" value="ECO:0007669"/>
    <property type="project" value="UniProtKB-UniRule"/>
</dbReference>
<dbReference type="GO" id="GO:0004417">
    <property type="term" value="F:hydroxyethylthiazole kinase activity"/>
    <property type="evidence" value="ECO:0007669"/>
    <property type="project" value="UniProtKB-UniRule"/>
</dbReference>
<dbReference type="GO" id="GO:0000287">
    <property type="term" value="F:magnesium ion binding"/>
    <property type="evidence" value="ECO:0007669"/>
    <property type="project" value="UniProtKB-UniRule"/>
</dbReference>
<dbReference type="GO" id="GO:0009228">
    <property type="term" value="P:thiamine biosynthetic process"/>
    <property type="evidence" value="ECO:0007669"/>
    <property type="project" value="UniProtKB-KW"/>
</dbReference>
<dbReference type="GO" id="GO:0009229">
    <property type="term" value="P:thiamine diphosphate biosynthetic process"/>
    <property type="evidence" value="ECO:0007669"/>
    <property type="project" value="UniProtKB-UniRule"/>
</dbReference>
<dbReference type="CDD" id="cd01170">
    <property type="entry name" value="THZ_kinase"/>
    <property type="match status" value="1"/>
</dbReference>
<dbReference type="FunFam" id="3.40.1190.20:FF:000015">
    <property type="entry name" value="Hydroxyethylthiazole kinase"/>
    <property type="match status" value="1"/>
</dbReference>
<dbReference type="Gene3D" id="3.40.1190.20">
    <property type="match status" value="1"/>
</dbReference>
<dbReference type="HAMAP" id="MF_00228">
    <property type="entry name" value="Thz_kinase"/>
    <property type="match status" value="1"/>
</dbReference>
<dbReference type="InterPro" id="IPR000417">
    <property type="entry name" value="Hyethyz_kinase"/>
</dbReference>
<dbReference type="InterPro" id="IPR029056">
    <property type="entry name" value="Ribokinase-like"/>
</dbReference>
<dbReference type="NCBIfam" id="NF006830">
    <property type="entry name" value="PRK09355.1"/>
    <property type="match status" value="1"/>
</dbReference>
<dbReference type="NCBIfam" id="TIGR00694">
    <property type="entry name" value="thiM"/>
    <property type="match status" value="1"/>
</dbReference>
<dbReference type="Pfam" id="PF02110">
    <property type="entry name" value="HK"/>
    <property type="match status" value="1"/>
</dbReference>
<dbReference type="PIRSF" id="PIRSF000513">
    <property type="entry name" value="Thz_kinase"/>
    <property type="match status" value="1"/>
</dbReference>
<dbReference type="PRINTS" id="PR01099">
    <property type="entry name" value="HYETHTZKNASE"/>
</dbReference>
<dbReference type="SUPFAM" id="SSF53613">
    <property type="entry name" value="Ribokinase-like"/>
    <property type="match status" value="1"/>
</dbReference>
<proteinExistence type="inferred from homology"/>
<comment type="function">
    <text evidence="1">Catalyzes the phosphorylation of the hydroxyl group of 4-methyl-5-beta-hydroxyethylthiazole (THZ).</text>
</comment>
<comment type="catalytic activity">
    <reaction evidence="1">
        <text>5-(2-hydroxyethyl)-4-methylthiazole + ATP = 4-methyl-5-(2-phosphooxyethyl)-thiazole + ADP + H(+)</text>
        <dbReference type="Rhea" id="RHEA:24212"/>
        <dbReference type="ChEBI" id="CHEBI:15378"/>
        <dbReference type="ChEBI" id="CHEBI:17957"/>
        <dbReference type="ChEBI" id="CHEBI:30616"/>
        <dbReference type="ChEBI" id="CHEBI:58296"/>
        <dbReference type="ChEBI" id="CHEBI:456216"/>
        <dbReference type="EC" id="2.7.1.50"/>
    </reaction>
</comment>
<comment type="cofactor">
    <cofactor evidence="1">
        <name>Mg(2+)</name>
        <dbReference type="ChEBI" id="CHEBI:18420"/>
    </cofactor>
</comment>
<comment type="pathway">
    <text evidence="1">Cofactor biosynthesis; thiamine diphosphate biosynthesis; 4-methyl-5-(2-phosphoethyl)-thiazole from 5-(2-hydroxyethyl)-4-methylthiazole: step 1/1.</text>
</comment>
<comment type="similarity">
    <text evidence="1">Belongs to the Thz kinase family.</text>
</comment>
<sequence>MQVDLLSSAQSAHALHLFHQHSPLVHCMTNDVVQTFTANTLLALGASPAMVIETEEASQFAAIASALLINVGTLTQPRAQAMSAAVEQAQTPWTLDPVAVGALDYRRRFCVELLSHKPTAIRGNASEIMALAGVANGGRGVDTTDAAANAIPAAQTLARETGAIVVVTGEVDYVTDGHRIVGIHGGDPLMTKVVGTGCALSAVVAACCALPGDTLENVASACHWMKQAGERAVARSEGPGSFVPHFLDALWQLAQEVQA</sequence>
<name>THIM_ECO27</name>
<protein>
    <recommendedName>
        <fullName evidence="1">Hydroxyethylthiazole kinase</fullName>
        <ecNumber evidence="1">2.7.1.50</ecNumber>
    </recommendedName>
    <alternativeName>
        <fullName evidence="1">4-methyl-5-beta-hydroxyethylthiazole kinase</fullName>
        <shortName evidence="1">TH kinase</shortName>
        <shortName evidence="1">Thz kinase</shortName>
    </alternativeName>
</protein>
<accession>B7UFC1</accession>
<organism>
    <name type="scientific">Escherichia coli O127:H6 (strain E2348/69 / EPEC)</name>
    <dbReference type="NCBI Taxonomy" id="574521"/>
    <lineage>
        <taxon>Bacteria</taxon>
        <taxon>Pseudomonadati</taxon>
        <taxon>Pseudomonadota</taxon>
        <taxon>Gammaproteobacteria</taxon>
        <taxon>Enterobacterales</taxon>
        <taxon>Enterobacteriaceae</taxon>
        <taxon>Escherichia</taxon>
    </lineage>
</organism>
<evidence type="ECO:0000255" key="1">
    <source>
        <dbReference type="HAMAP-Rule" id="MF_00228"/>
    </source>
</evidence>
<keyword id="KW-0067">ATP-binding</keyword>
<keyword id="KW-0418">Kinase</keyword>
<keyword id="KW-0460">Magnesium</keyword>
<keyword id="KW-0479">Metal-binding</keyword>
<keyword id="KW-0547">Nucleotide-binding</keyword>
<keyword id="KW-1185">Reference proteome</keyword>
<keyword id="KW-0784">Thiamine biosynthesis</keyword>
<keyword id="KW-0808">Transferase</keyword>
<reference key="1">
    <citation type="journal article" date="2009" name="J. Bacteriol.">
        <title>Complete genome sequence and comparative genome analysis of enteropathogenic Escherichia coli O127:H6 strain E2348/69.</title>
        <authorList>
            <person name="Iguchi A."/>
            <person name="Thomson N.R."/>
            <person name="Ogura Y."/>
            <person name="Saunders D."/>
            <person name="Ooka T."/>
            <person name="Henderson I.R."/>
            <person name="Harris D."/>
            <person name="Asadulghani M."/>
            <person name="Kurokawa K."/>
            <person name="Dean P."/>
            <person name="Kenny B."/>
            <person name="Quail M.A."/>
            <person name="Thurston S."/>
            <person name="Dougan G."/>
            <person name="Hayashi T."/>
            <person name="Parkhill J."/>
            <person name="Frankel G."/>
        </authorList>
    </citation>
    <scope>NUCLEOTIDE SEQUENCE [LARGE SCALE GENOMIC DNA]</scope>
    <source>
        <strain>E2348/69 / EPEC</strain>
    </source>
</reference>
<feature type="chain" id="PRO_1000198120" description="Hydroxyethylthiazole kinase">
    <location>
        <begin position="1"/>
        <end position="259"/>
    </location>
</feature>
<feature type="binding site" evidence="1">
    <location>
        <position position="50"/>
    </location>
    <ligand>
        <name>substrate</name>
    </ligand>
</feature>
<feature type="binding site" evidence="1">
    <location>
        <position position="122"/>
    </location>
    <ligand>
        <name>ATP</name>
        <dbReference type="ChEBI" id="CHEBI:30616"/>
    </ligand>
</feature>
<feature type="binding site" evidence="1">
    <location>
        <position position="168"/>
    </location>
    <ligand>
        <name>ATP</name>
        <dbReference type="ChEBI" id="CHEBI:30616"/>
    </ligand>
</feature>
<feature type="binding site" evidence="1">
    <location>
        <position position="195"/>
    </location>
    <ligand>
        <name>substrate</name>
    </ligand>
</feature>